<reference evidence="10" key="1">
    <citation type="journal article" date="2004" name="Genome Res.">
        <title>The status, quality, and expansion of the NIH full-length cDNA project: the Mammalian Gene Collection (MGC).</title>
        <authorList>
            <consortium name="The MGC Project Team"/>
        </authorList>
    </citation>
    <scope>NUCLEOTIDE SEQUENCE [LARGE SCALE MRNA]</scope>
    <source>
        <tissue evidence="10">Kidney</tissue>
    </source>
</reference>
<name>ACK1_RAT</name>
<evidence type="ECO:0000250" key="1"/>
<evidence type="ECO:0000250" key="2">
    <source>
        <dbReference type="UniProtKB" id="O54967"/>
    </source>
</evidence>
<evidence type="ECO:0000250" key="3">
    <source>
        <dbReference type="UniProtKB" id="P00517"/>
    </source>
</evidence>
<evidence type="ECO:0000250" key="4">
    <source>
        <dbReference type="UniProtKB" id="Q07912"/>
    </source>
</evidence>
<evidence type="ECO:0000255" key="5"/>
<evidence type="ECO:0000255" key="6">
    <source>
        <dbReference type="PROSITE-ProRule" id="PRU00159"/>
    </source>
</evidence>
<evidence type="ECO:0000255" key="7">
    <source>
        <dbReference type="PROSITE-ProRule" id="PRU00192"/>
    </source>
</evidence>
<evidence type="ECO:0000255" key="8">
    <source>
        <dbReference type="PROSITE-ProRule" id="PRU10028"/>
    </source>
</evidence>
<evidence type="ECO:0000256" key="9">
    <source>
        <dbReference type="SAM" id="MobiDB-lite"/>
    </source>
</evidence>
<evidence type="ECO:0000312" key="10">
    <source>
        <dbReference type="EMBL" id="AAH85825.1"/>
    </source>
</evidence>
<dbReference type="EC" id="2.7.10.2"/>
<dbReference type="EC" id="2.7.11.1"/>
<dbReference type="EMBL" id="BC085825">
    <property type="protein sequence ID" value="AAH85825.1"/>
    <property type="molecule type" value="mRNA"/>
</dbReference>
<dbReference type="RefSeq" id="NP_001008337.1">
    <property type="nucleotide sequence ID" value="NM_001008336.1"/>
</dbReference>
<dbReference type="SMR" id="Q5U2X5"/>
<dbReference type="BioGRID" id="257704">
    <property type="interactions" value="2"/>
</dbReference>
<dbReference type="FunCoup" id="Q5U2X5">
    <property type="interactions" value="363"/>
</dbReference>
<dbReference type="STRING" id="10116.ENSRNOP00000070836"/>
<dbReference type="GlyGen" id="Q5U2X5">
    <property type="glycosylation" value="4 sites"/>
</dbReference>
<dbReference type="iPTMnet" id="Q5U2X5"/>
<dbReference type="PhosphoSitePlus" id="Q5U2X5"/>
<dbReference type="PaxDb" id="10116-ENSRNOP00000002411"/>
<dbReference type="GeneID" id="303882"/>
<dbReference type="KEGG" id="rno:303882"/>
<dbReference type="AGR" id="RGD:1305957"/>
<dbReference type="CTD" id="10188"/>
<dbReference type="RGD" id="1305957">
    <property type="gene designation" value="Tnk2"/>
</dbReference>
<dbReference type="eggNOG" id="KOG0199">
    <property type="taxonomic scope" value="Eukaryota"/>
</dbReference>
<dbReference type="InParanoid" id="Q5U2X5"/>
<dbReference type="OrthoDB" id="635774at2759"/>
<dbReference type="Reactome" id="R-RNO-9842663">
    <property type="pathway name" value="Signaling by LTK"/>
</dbReference>
<dbReference type="PRO" id="PR:Q5U2X5"/>
<dbReference type="Proteomes" id="UP000002494">
    <property type="component" value="Unplaced"/>
</dbReference>
<dbReference type="GO" id="GO:0005912">
    <property type="term" value="C:adherens junction"/>
    <property type="evidence" value="ECO:0007669"/>
    <property type="project" value="UniProtKB-SubCell"/>
</dbReference>
<dbReference type="GO" id="GO:0030424">
    <property type="term" value="C:axon"/>
    <property type="evidence" value="ECO:0000266"/>
    <property type="project" value="RGD"/>
</dbReference>
<dbReference type="GO" id="GO:0005905">
    <property type="term" value="C:clathrin-coated pit"/>
    <property type="evidence" value="ECO:0000266"/>
    <property type="project" value="RGD"/>
</dbReference>
<dbReference type="GO" id="GO:0030136">
    <property type="term" value="C:clathrin-coated vesicle"/>
    <property type="evidence" value="ECO:0000266"/>
    <property type="project" value="RGD"/>
</dbReference>
<dbReference type="GO" id="GO:0097268">
    <property type="term" value="C:cytoophidium"/>
    <property type="evidence" value="ECO:0000266"/>
    <property type="project" value="RGD"/>
</dbReference>
<dbReference type="GO" id="GO:0005737">
    <property type="term" value="C:cytoplasm"/>
    <property type="evidence" value="ECO:0000250"/>
    <property type="project" value="UniProtKB"/>
</dbReference>
<dbReference type="GO" id="GO:0030659">
    <property type="term" value="C:cytoplasmic vesicle membrane"/>
    <property type="evidence" value="ECO:0007669"/>
    <property type="project" value="UniProtKB-SubCell"/>
</dbReference>
<dbReference type="GO" id="GO:0030425">
    <property type="term" value="C:dendrite"/>
    <property type="evidence" value="ECO:0000266"/>
    <property type="project" value="RGD"/>
</dbReference>
<dbReference type="GO" id="GO:0005768">
    <property type="term" value="C:endosome"/>
    <property type="evidence" value="ECO:0000250"/>
    <property type="project" value="UniProtKB"/>
</dbReference>
<dbReference type="GO" id="GO:0070436">
    <property type="term" value="C:Grb2-EGFR complex"/>
    <property type="evidence" value="ECO:0000266"/>
    <property type="project" value="RGD"/>
</dbReference>
<dbReference type="GO" id="GO:0030426">
    <property type="term" value="C:growth cone"/>
    <property type="evidence" value="ECO:0000266"/>
    <property type="project" value="RGD"/>
</dbReference>
<dbReference type="GO" id="GO:0043025">
    <property type="term" value="C:neuronal cell body"/>
    <property type="evidence" value="ECO:0000266"/>
    <property type="project" value="RGD"/>
</dbReference>
<dbReference type="GO" id="GO:0005634">
    <property type="term" value="C:nucleus"/>
    <property type="evidence" value="ECO:0000250"/>
    <property type="project" value="UniProtKB"/>
</dbReference>
<dbReference type="GO" id="GO:0005886">
    <property type="term" value="C:plasma membrane"/>
    <property type="evidence" value="ECO:0000250"/>
    <property type="project" value="UniProtKB"/>
</dbReference>
<dbReference type="GO" id="GO:0099524">
    <property type="term" value="C:postsynaptic cytosol"/>
    <property type="evidence" value="ECO:0000266"/>
    <property type="project" value="RGD"/>
</dbReference>
<dbReference type="GO" id="GO:0099523">
    <property type="term" value="C:presynaptic cytosol"/>
    <property type="evidence" value="ECO:0000266"/>
    <property type="project" value="RGD"/>
</dbReference>
<dbReference type="GO" id="GO:0005524">
    <property type="term" value="F:ATP binding"/>
    <property type="evidence" value="ECO:0007669"/>
    <property type="project" value="UniProtKB-KW"/>
</dbReference>
<dbReference type="GO" id="GO:0005154">
    <property type="term" value="F:epidermal growth factor receptor binding"/>
    <property type="evidence" value="ECO:0000266"/>
    <property type="project" value="RGD"/>
</dbReference>
<dbReference type="GO" id="GO:0042802">
    <property type="term" value="F:identical protein binding"/>
    <property type="evidence" value="ECO:0000266"/>
    <property type="project" value="RGD"/>
</dbReference>
<dbReference type="GO" id="GO:0046872">
    <property type="term" value="F:metal ion binding"/>
    <property type="evidence" value="ECO:0007669"/>
    <property type="project" value="UniProtKB-KW"/>
</dbReference>
<dbReference type="GO" id="GO:0004715">
    <property type="term" value="F:non-membrane spanning protein tyrosine kinase activity"/>
    <property type="evidence" value="ECO:0007669"/>
    <property type="project" value="UniProtKB-EC"/>
</dbReference>
<dbReference type="GO" id="GO:0106310">
    <property type="term" value="F:protein serine kinase activity"/>
    <property type="evidence" value="ECO:0007669"/>
    <property type="project" value="RHEA"/>
</dbReference>
<dbReference type="GO" id="GO:0004674">
    <property type="term" value="F:protein serine/threonine kinase activity"/>
    <property type="evidence" value="ECO:0007669"/>
    <property type="project" value="UniProtKB-KW"/>
</dbReference>
<dbReference type="GO" id="GO:0004712">
    <property type="term" value="F:protein serine/threonine/tyrosine kinase activity"/>
    <property type="evidence" value="ECO:0000266"/>
    <property type="project" value="RGD"/>
</dbReference>
<dbReference type="GO" id="GO:0004713">
    <property type="term" value="F:protein tyrosine kinase activity"/>
    <property type="evidence" value="ECO:0000314"/>
    <property type="project" value="MGI"/>
</dbReference>
<dbReference type="GO" id="GO:0031625">
    <property type="term" value="F:ubiquitin protein ligase binding"/>
    <property type="evidence" value="ECO:0000266"/>
    <property type="project" value="RGD"/>
</dbReference>
<dbReference type="GO" id="GO:0050699">
    <property type="term" value="F:WW domain binding"/>
    <property type="evidence" value="ECO:0000266"/>
    <property type="project" value="RGD"/>
</dbReference>
<dbReference type="GO" id="GO:0006897">
    <property type="term" value="P:endocytosis"/>
    <property type="evidence" value="ECO:0007669"/>
    <property type="project" value="UniProtKB-KW"/>
</dbReference>
<dbReference type="GO" id="GO:0016310">
    <property type="term" value="P:phosphorylation"/>
    <property type="evidence" value="ECO:0000250"/>
    <property type="project" value="UniProtKB"/>
</dbReference>
<dbReference type="GO" id="GO:2000369">
    <property type="term" value="P:regulation of clathrin-dependent endocytosis"/>
    <property type="evidence" value="ECO:0000266"/>
    <property type="project" value="RGD"/>
</dbReference>
<dbReference type="GO" id="GO:0007165">
    <property type="term" value="P:signal transduction"/>
    <property type="evidence" value="ECO:0007669"/>
    <property type="project" value="InterPro"/>
</dbReference>
<dbReference type="GO" id="GO:0007286">
    <property type="term" value="P:spermatid development"/>
    <property type="evidence" value="ECO:0000266"/>
    <property type="project" value="RGD"/>
</dbReference>
<dbReference type="CDD" id="cd05040">
    <property type="entry name" value="PTKc_Ack_like"/>
    <property type="match status" value="1"/>
</dbReference>
<dbReference type="CDD" id="cd09539">
    <property type="entry name" value="SAM_TNK-like"/>
    <property type="match status" value="1"/>
</dbReference>
<dbReference type="CDD" id="cd14274">
    <property type="entry name" value="UBA_ACK1"/>
    <property type="match status" value="1"/>
</dbReference>
<dbReference type="CDD" id="cd14328">
    <property type="entry name" value="UBA_TNK1"/>
    <property type="match status" value="1"/>
</dbReference>
<dbReference type="FunFam" id="4.10.680.10:FF:000001">
    <property type="entry name" value="activated CDC42 kinase 1 isoform X1"/>
    <property type="match status" value="1"/>
</dbReference>
<dbReference type="FunFam" id="1.10.8.10:FF:000048">
    <property type="entry name" value="activated CDC42 kinase 1 isoform X2"/>
    <property type="match status" value="1"/>
</dbReference>
<dbReference type="FunFam" id="1.10.510.10:FF:000080">
    <property type="entry name" value="Putative activated CDC42 kinase 1"/>
    <property type="match status" value="1"/>
</dbReference>
<dbReference type="FunFam" id="3.30.200.20:FF:000107">
    <property type="entry name" value="Putative activated CDC42 kinase 1"/>
    <property type="match status" value="1"/>
</dbReference>
<dbReference type="Gene3D" id="4.10.680.10">
    <property type="entry name" value="Cdc42-like binding domain"/>
    <property type="match status" value="1"/>
</dbReference>
<dbReference type="Gene3D" id="1.10.8.10">
    <property type="entry name" value="DNA helicase RuvA subunit, C-terminal domain"/>
    <property type="match status" value="1"/>
</dbReference>
<dbReference type="Gene3D" id="3.30.200.20">
    <property type="entry name" value="Phosphorylase Kinase, domain 1"/>
    <property type="match status" value="1"/>
</dbReference>
<dbReference type="Gene3D" id="1.10.510.10">
    <property type="entry name" value="Transferase(Phosphotransferase) domain 1"/>
    <property type="match status" value="1"/>
</dbReference>
<dbReference type="InterPro" id="IPR055175">
    <property type="entry name" value="ACK/TNK-like_SAM"/>
</dbReference>
<dbReference type="InterPro" id="IPR030220">
    <property type="entry name" value="Ack1_UBA_dom"/>
</dbReference>
<dbReference type="InterPro" id="IPR015116">
    <property type="entry name" value="Cdc42-bd-like"/>
</dbReference>
<dbReference type="InterPro" id="IPR037085">
    <property type="entry name" value="Cdc42-bd-like_dom_sf"/>
</dbReference>
<dbReference type="InterPro" id="IPR052112">
    <property type="entry name" value="EGFR_SigReg_Kinase"/>
</dbReference>
<dbReference type="InterPro" id="IPR011009">
    <property type="entry name" value="Kinase-like_dom_sf"/>
</dbReference>
<dbReference type="InterPro" id="IPR021619">
    <property type="entry name" value="Mig-6"/>
</dbReference>
<dbReference type="InterPro" id="IPR000719">
    <property type="entry name" value="Prot_kinase_dom"/>
</dbReference>
<dbReference type="InterPro" id="IPR017441">
    <property type="entry name" value="Protein_kinase_ATP_BS"/>
</dbReference>
<dbReference type="InterPro" id="IPR001245">
    <property type="entry name" value="Ser-Thr/Tyr_kinase_cat_dom"/>
</dbReference>
<dbReference type="InterPro" id="IPR036028">
    <property type="entry name" value="SH3-like_dom_sf"/>
</dbReference>
<dbReference type="InterPro" id="IPR001452">
    <property type="entry name" value="SH3_domain"/>
</dbReference>
<dbReference type="InterPro" id="IPR049587">
    <property type="entry name" value="TNK-like_SAM"/>
</dbReference>
<dbReference type="InterPro" id="IPR008266">
    <property type="entry name" value="Tyr_kinase_AS"/>
</dbReference>
<dbReference type="InterPro" id="IPR020635">
    <property type="entry name" value="Tyr_kinase_cat_dom"/>
</dbReference>
<dbReference type="PANTHER" id="PTHR14254">
    <property type="entry name" value="GENE 33 POLYPEPTIDE"/>
    <property type="match status" value="1"/>
</dbReference>
<dbReference type="PANTHER" id="PTHR14254:SF6">
    <property type="entry name" value="NON-SPECIFIC PROTEIN-TYROSINE KINASE"/>
    <property type="match status" value="1"/>
</dbReference>
<dbReference type="Pfam" id="PF09027">
    <property type="entry name" value="GTPase_binding"/>
    <property type="match status" value="1"/>
</dbReference>
<dbReference type="Pfam" id="PF11555">
    <property type="entry name" value="Inhibitor_Mig-6"/>
    <property type="match status" value="1"/>
</dbReference>
<dbReference type="Pfam" id="PF07714">
    <property type="entry name" value="PK_Tyr_Ser-Thr"/>
    <property type="match status" value="1"/>
</dbReference>
<dbReference type="Pfam" id="PF22931">
    <property type="entry name" value="SAM_TNK"/>
    <property type="match status" value="1"/>
</dbReference>
<dbReference type="Pfam" id="PF14604">
    <property type="entry name" value="SH3_9"/>
    <property type="match status" value="1"/>
</dbReference>
<dbReference type="PRINTS" id="PR00109">
    <property type="entry name" value="TYRKINASE"/>
</dbReference>
<dbReference type="SMART" id="SM00326">
    <property type="entry name" value="SH3"/>
    <property type="match status" value="1"/>
</dbReference>
<dbReference type="SMART" id="SM00219">
    <property type="entry name" value="TyrKc"/>
    <property type="match status" value="1"/>
</dbReference>
<dbReference type="SUPFAM" id="SSF56112">
    <property type="entry name" value="Protein kinase-like (PK-like)"/>
    <property type="match status" value="1"/>
</dbReference>
<dbReference type="SUPFAM" id="SSF50044">
    <property type="entry name" value="SH3-domain"/>
    <property type="match status" value="1"/>
</dbReference>
<dbReference type="PROSITE" id="PS00107">
    <property type="entry name" value="PROTEIN_KINASE_ATP"/>
    <property type="match status" value="1"/>
</dbReference>
<dbReference type="PROSITE" id="PS50011">
    <property type="entry name" value="PROTEIN_KINASE_DOM"/>
    <property type="match status" value="1"/>
</dbReference>
<dbReference type="PROSITE" id="PS00109">
    <property type="entry name" value="PROTEIN_KINASE_TYR"/>
    <property type="match status" value="1"/>
</dbReference>
<dbReference type="PROSITE" id="PS50002">
    <property type="entry name" value="SH3"/>
    <property type="match status" value="1"/>
</dbReference>
<gene>
    <name evidence="4" type="primary">Tnk2</name>
    <name evidence="4" type="synonym">Ack1</name>
</gene>
<comment type="function">
    <text evidence="1">Non-receptor tyrosine-protein and serine/threonine-protein kinase that is implicated in cell spreading and migration, cell survival, cell growth and proliferation. Transduces extracellular signals to cytosolic and nuclear effectors. Phosphorylates AKT1, AR, MCF2, WASL and WWOX. Implicated in trafficking and clathrin-mediated endocytosis through binding to epidermal growth factor receptor (EGFR) and clathrin. Binds to both poly- and mono-ubiquitin and regulates ligand-induced degradation of EGFR, thereby contributing to the accumulation of EGFR at the limiting membrane of early endosomes. Downstream effector of CDC42 which mediates CDC42-dependent cell migration via phosphorylation of BCAR1. May be involved both in adult synaptic function and plasticity and in brain development. Activates AKT1 by phosphorylating it on 'Tyr-176'. Phosphorylates AR on 'Tyr-267' and 'Tyr-363', thereby promoting its recruitment to androgen-responsive enhancers (AREs). Phosphorylates WWOX on 'Tyr-287'. Phosphorylates MCF2, thereby enhancing its activity as a guanine nucleotide exchange factor (GEF) toward Rho family proteins. Contributes to the control of AXL receptor levels. Confers metastatic properties on cancer cells and promotes tumor growth by negatively regulating tumor suppressor such as WWOX and positively regulating pro-survival factors such as AKT1 and AR (By similarity).</text>
</comment>
<comment type="catalytic activity">
    <reaction evidence="4 8">
        <text>L-tyrosyl-[protein] + ATP = O-phospho-L-tyrosyl-[protein] + ADP + H(+)</text>
        <dbReference type="Rhea" id="RHEA:10596"/>
        <dbReference type="Rhea" id="RHEA-COMP:10136"/>
        <dbReference type="Rhea" id="RHEA-COMP:20101"/>
        <dbReference type="ChEBI" id="CHEBI:15378"/>
        <dbReference type="ChEBI" id="CHEBI:30616"/>
        <dbReference type="ChEBI" id="CHEBI:46858"/>
        <dbReference type="ChEBI" id="CHEBI:61978"/>
        <dbReference type="ChEBI" id="CHEBI:456216"/>
        <dbReference type="EC" id="2.7.10.2"/>
    </reaction>
</comment>
<comment type="catalytic activity">
    <reaction>
        <text>L-seryl-[protein] + ATP = O-phospho-L-seryl-[protein] + ADP + H(+)</text>
        <dbReference type="Rhea" id="RHEA:17989"/>
        <dbReference type="Rhea" id="RHEA-COMP:9863"/>
        <dbReference type="Rhea" id="RHEA-COMP:11604"/>
        <dbReference type="ChEBI" id="CHEBI:15378"/>
        <dbReference type="ChEBI" id="CHEBI:29999"/>
        <dbReference type="ChEBI" id="CHEBI:30616"/>
        <dbReference type="ChEBI" id="CHEBI:83421"/>
        <dbReference type="ChEBI" id="CHEBI:456216"/>
        <dbReference type="EC" id="2.7.11.1"/>
    </reaction>
</comment>
<comment type="catalytic activity">
    <reaction>
        <text>L-threonyl-[protein] + ATP = O-phospho-L-threonyl-[protein] + ADP + H(+)</text>
        <dbReference type="Rhea" id="RHEA:46608"/>
        <dbReference type="Rhea" id="RHEA-COMP:11060"/>
        <dbReference type="Rhea" id="RHEA-COMP:11605"/>
        <dbReference type="ChEBI" id="CHEBI:15378"/>
        <dbReference type="ChEBI" id="CHEBI:30013"/>
        <dbReference type="ChEBI" id="CHEBI:30616"/>
        <dbReference type="ChEBI" id="CHEBI:61977"/>
        <dbReference type="ChEBI" id="CHEBI:456216"/>
        <dbReference type="EC" id="2.7.11.1"/>
    </reaction>
</comment>
<comment type="cofactor">
    <cofactor evidence="4">
        <name>Mg(2+)</name>
        <dbReference type="ChEBI" id="CHEBI:18420"/>
    </cofactor>
</comment>
<comment type="subunit">
    <text evidence="1">Homodimer. Interacts with CDC42. Interacts with CSPG4 (activated). Interacts with MERTK (activated); stimulates autophosphorylation. May interact (phosphorylated) with HSP90AB1; maintains kinase activity. Interacts with NPHP1. Interacts with SNX9 (via SH3 domain). Interacts with SRC (via SH2 and SH3 domain). Interacts with EGFR, and this interaction is dependent on EGF stimulation and kinase activity of EGFR. Interacts (via kinase domain) with AKT1. Part of a collagen stimulated complex involved in cell migration composed of CDC42, CRK, TNK2 and BCAR1/p130cas. Interacts with BCAR1/p130cas via SH3 domains. Forms complexes with GRB2 and numerous receptor tyrosine kinases (RTK) including LTK, AXL or PDGFRL, in which GRB2 promotes RTK recruitment by TNK2. Interacts with NEDD4 (via WW3 domain). NEDD4L and EGF promote association with NEDD4 (By similarity).</text>
</comment>
<comment type="subcellular location">
    <subcellularLocation>
        <location evidence="2">Cell membrane</location>
    </subcellularLocation>
    <subcellularLocation>
        <location evidence="2">Nucleus</location>
    </subcellularLocation>
    <subcellularLocation>
        <location evidence="2">Endosome</location>
    </subcellularLocation>
    <subcellularLocation>
        <location evidence="2">Cell junction</location>
        <location evidence="2">Adherens junction</location>
    </subcellularLocation>
    <subcellularLocation>
        <location>Cytoplasmic vesicle membrane</location>
        <topology>Peripheral membrane protein</topology>
        <orientation evidence="4">Cytoplasmic side</orientation>
    </subcellularLocation>
    <subcellularLocation>
        <location evidence="4">Cytoplasmic vesicle</location>
        <location evidence="4">Clathrin-coated vesicle</location>
    </subcellularLocation>
    <subcellularLocation>
        <location evidence="2">Membrane</location>
        <location evidence="2">Clathrin-coated pit</location>
    </subcellularLocation>
    <subcellularLocation>
        <location evidence="2">Cytoplasm</location>
        <location evidence="2">Cytosol</location>
    </subcellularLocation>
    <text evidence="2">The Tyr-284 phosphorylated form is found both in the membrane and nucleus. Co-localizes with EGFR on endosomes. Nuclear translocation is CDC42-dependent. Detected in long filamentous cytosolic structures where it co-localizes with CTPS1.</text>
</comment>
<comment type="domain">
    <text evidence="1">The EBD (EGFR-binding domain) domain is necessary for interaction with EGFR.</text>
</comment>
<comment type="domain">
    <text evidence="1">The SAM-like domain is necessary for NEDD4-mediated ubiquitination. Promotes membrane localization and dimerization to allow for autophosphorylation (By similarity).</text>
</comment>
<comment type="domain">
    <text evidence="1">The UBA domain binds both poly- and mono-ubiquitin.</text>
</comment>
<comment type="PTM">
    <text evidence="1">Autophosphorylation regulates kinase activity. Phosphorylation on Tyr-518 is required for interaction with SRC and is observed during association with clathrin-coated pits (By similarity).</text>
</comment>
<comment type="PTM">
    <text evidence="1">Polyubiquitinated by NEDD4 and NEDD4L. Degradation can be induced by EGF and is lysosome-dependent (By similarity).</text>
</comment>
<comment type="similarity">
    <text evidence="4 6">Belongs to the protein kinase superfamily. Tyr protein kinase family.</text>
</comment>
<sequence>MQPEEGTGWLLELLSEVQLQQYFLRLRDDLNITRLSHFEYVKNEDLEKIGMGRPGQRRLWEAVKRRKAMCKRKSWMSKVFSGKRQEAEFPSHHSQSTFRKPSPTPGGLAGEGTLQSLTCLIGEKDLRLLEKLGDGSFGVVRRGEWDAPAGKTVSVAVKCLKPDVLSQPEAMDDFIREVNAMHSLDHRNLIRLYGVVLTPPMKMVTELAPLGSLLDRLRKHQGHFLLGTLSRYAVQVAEGMGYLESKRFIHRDLAARNLLLATRDLVKIGDFGLMRALPQNDGHYVMQEHRKVPFAWCAPESLKTRTFSHASDTWMFGVTLWEMFTYGQEPWIGLNGSQILHKIDKEGERLPRPEDCPQDIYNVMVQCWAHKPEDRPTFVALRDFLLEAQPTDMRALQDFEEPDKLHIQMNDVITVIEGRAENYWWRGQNTRTLCVGPFPRNVVTSVAGLSAQDISQPLQNSFIHTGHGDSDPRHCWGFPDRIDELYLGNPMDPPDLLSVELSTSRPTQHLGRMKKPTYDPVSEDPDPLSSDFKRLGLRKPALPRGLWLAKPSARVPGTKAGRSSGGEVTLIDFGEEPVAPTPRPCAPSLAQLAMDACSLLDKTPPQSPTRALPRPLHPTPVVDWDARPLPPPPAYDDVAQDEDDFEVCSINSTLVSAGLPTGPSQGETNYAFVPEQAQLPPALEDNLFLPPQGGGQPPSSAQTAEIFQALQQECMRQLQVPTGQLTPSPTPGGDDKPQVPPRVPIPPRPTRPRVGLSPAPLGEEEASRWPGPSSPPRVPPREPLSPQGSRTPSPLVPPGSSPLPHRLSSSPGKTMPTTQSFASDPKYATPQVIQAPGPRAGPCILPIVRDGRKVSSTHYYLLPERPPYLERYQRFLREAQSPEEPAALPVPPLLPPPSTPAPAAPTATVRPMPQAAPDPKANFSTNNSNPGAQPPSLRASARLPQRGCPGDGQEAARPADKVQMLQAMVHGVTTEECQAALRSHSWSIQRAAQYLKVEQLFGLGLRPRVECHKVLEMFDWNLEQAGCHLLGSCGPAHHKR</sequence>
<organism>
    <name type="scientific">Rattus norvegicus</name>
    <name type="common">Rat</name>
    <dbReference type="NCBI Taxonomy" id="10116"/>
    <lineage>
        <taxon>Eukaryota</taxon>
        <taxon>Metazoa</taxon>
        <taxon>Chordata</taxon>
        <taxon>Craniata</taxon>
        <taxon>Vertebrata</taxon>
        <taxon>Euteleostomi</taxon>
        <taxon>Mammalia</taxon>
        <taxon>Eutheria</taxon>
        <taxon>Euarchontoglires</taxon>
        <taxon>Glires</taxon>
        <taxon>Rodentia</taxon>
        <taxon>Myomorpha</taxon>
        <taxon>Muroidea</taxon>
        <taxon>Muridae</taxon>
        <taxon>Murinae</taxon>
        <taxon>Rattus</taxon>
    </lineage>
</organism>
<protein>
    <recommendedName>
        <fullName>Activated CDC42 kinase 1</fullName>
        <shortName>ACK-1</shortName>
        <ecNumber>2.7.10.2</ecNumber>
        <ecNumber>2.7.11.1</ecNumber>
    </recommendedName>
    <alternativeName>
        <fullName>Tyrosine kinase non-receptor protein 2</fullName>
    </alternativeName>
</protein>
<proteinExistence type="evidence at transcript level"/>
<accession>Q5U2X5</accession>
<feature type="chain" id="PRO_0000312830" description="Activated CDC42 kinase 1">
    <location>
        <begin position="1"/>
        <end position="1040"/>
    </location>
</feature>
<feature type="domain" description="Protein kinase" evidence="6">
    <location>
        <begin position="126"/>
        <end position="385"/>
    </location>
</feature>
<feature type="domain" description="SH3" evidence="7">
    <location>
        <begin position="388"/>
        <end position="448"/>
    </location>
</feature>
<feature type="domain" description="UBA" evidence="5">
    <location>
        <begin position="958"/>
        <end position="998"/>
    </location>
</feature>
<feature type="region of interest" description="SAM-like domain" evidence="1">
    <location>
        <begin position="1"/>
        <end position="110"/>
    </location>
</feature>
<feature type="region of interest" description="Disordered" evidence="9">
    <location>
        <begin position="86"/>
        <end position="109"/>
    </location>
</feature>
<feature type="region of interest" description="Disordered" evidence="9">
    <location>
        <begin position="505"/>
        <end position="527"/>
    </location>
</feature>
<feature type="region of interest" description="Required for interaction with SRC" evidence="1">
    <location>
        <begin position="623"/>
        <end position="652"/>
    </location>
</feature>
<feature type="region of interest" description="Required for interaction with NEDD4" evidence="1">
    <location>
        <begin position="632"/>
        <end position="635"/>
    </location>
</feature>
<feature type="region of interest" description="Disordered" evidence="9">
    <location>
        <begin position="722"/>
        <end position="824"/>
    </location>
</feature>
<feature type="region of interest" description="EBD domain" evidence="1">
    <location>
        <begin position="733"/>
        <end position="876"/>
    </location>
</feature>
<feature type="region of interest" description="Disordered" evidence="9">
    <location>
        <begin position="881"/>
        <end position="957"/>
    </location>
</feature>
<feature type="compositionally biased region" description="Pro residues" evidence="9">
    <location>
        <begin position="738"/>
        <end position="749"/>
    </location>
</feature>
<feature type="compositionally biased region" description="Pro residues" evidence="9">
    <location>
        <begin position="772"/>
        <end position="783"/>
    </location>
</feature>
<feature type="compositionally biased region" description="Low complexity" evidence="9">
    <location>
        <begin position="802"/>
        <end position="812"/>
    </location>
</feature>
<feature type="compositionally biased region" description="Pro residues" evidence="9">
    <location>
        <begin position="888"/>
        <end position="903"/>
    </location>
</feature>
<feature type="compositionally biased region" description="Polar residues" evidence="9">
    <location>
        <begin position="922"/>
        <end position="931"/>
    </location>
</feature>
<feature type="active site" description="Proton acceptor" evidence="3 6 8">
    <location>
        <position position="252"/>
    </location>
</feature>
<feature type="binding site" evidence="3 6">
    <location>
        <begin position="132"/>
        <end position="140"/>
    </location>
    <ligand>
        <name>ATP</name>
        <dbReference type="ChEBI" id="CHEBI:30616"/>
    </ligand>
</feature>
<feature type="binding site" evidence="2 6">
    <location>
        <position position="158"/>
    </location>
    <ligand>
        <name>ATP</name>
        <dbReference type="ChEBI" id="CHEBI:30616"/>
    </ligand>
</feature>
<feature type="modified residue" description="Phosphothreonine" evidence="2">
    <location>
        <position position="113"/>
    </location>
</feature>
<feature type="modified residue" description="Phosphotyrosine; by SRC and autocatalysis" evidence="4">
    <location>
        <position position="284"/>
    </location>
</feature>
<feature type="modified residue" description="Phosphotyrosine" evidence="4">
    <location>
        <position position="518"/>
    </location>
</feature>
<feature type="modified residue" description="Phosphotyrosine" evidence="4">
    <location>
        <position position="827"/>
    </location>
</feature>
<feature type="modified residue" description="Omega-N-methylarginine" evidence="2">
    <location>
        <position position="839"/>
    </location>
</feature>
<feature type="modified residue" description="Phosphotyrosine" evidence="4">
    <location>
        <position position="859"/>
    </location>
</feature>
<feature type="modified residue" description="Phosphotyrosine" evidence="4">
    <location>
        <position position="872"/>
    </location>
</feature>
<feature type="modified residue" description="Phosphoserine" evidence="4">
    <location>
        <position position="881"/>
    </location>
</feature>
<keyword id="KW-0067">ATP-binding</keyword>
<keyword id="KW-0965">Cell junction</keyword>
<keyword id="KW-1003">Cell membrane</keyword>
<keyword id="KW-0168">Coated pit</keyword>
<keyword id="KW-0963">Cytoplasm</keyword>
<keyword id="KW-0968">Cytoplasmic vesicle</keyword>
<keyword id="KW-0254">Endocytosis</keyword>
<keyword id="KW-0967">Endosome</keyword>
<keyword id="KW-0418">Kinase</keyword>
<keyword id="KW-0460">Magnesium</keyword>
<keyword id="KW-0472">Membrane</keyword>
<keyword id="KW-0479">Metal-binding</keyword>
<keyword id="KW-0488">Methylation</keyword>
<keyword id="KW-0547">Nucleotide-binding</keyword>
<keyword id="KW-0539">Nucleus</keyword>
<keyword id="KW-0597">Phosphoprotein</keyword>
<keyword id="KW-1185">Reference proteome</keyword>
<keyword id="KW-0723">Serine/threonine-protein kinase</keyword>
<keyword id="KW-0728">SH3 domain</keyword>
<keyword id="KW-0808">Transferase</keyword>
<keyword id="KW-0829">Tyrosine-protein kinase</keyword>
<keyword id="KW-0832">Ubl conjugation</keyword>